<reference key="1">
    <citation type="journal article" date="1987" name="J. Biol. Chem.">
        <title>Complete nucleotide sequence of cDNA and predicted amino acid sequence of rat acyl-CoA oxidase.</title>
        <authorList>
            <person name="Miyazawa S."/>
            <person name="Hayashi H."/>
            <person name="Hijikata M."/>
            <person name="Ishii N."/>
            <person name="Furuta S."/>
            <person name="Kagamiyama H."/>
            <person name="Osumi T."/>
            <person name="Hashimoto T."/>
        </authorList>
    </citation>
    <scope>NUCLEOTIDE SEQUENCE [MRNA] (ISOFORMS 1 AND 2)</scope>
    <scope>PROTEIN SEQUENCE OF 469-491</scope>
    <scope>CLEAVAGE SITE</scope>
</reference>
<reference key="2">
    <citation type="journal article" date="2004" name="Genome Res.">
        <title>The status, quality, and expansion of the NIH full-length cDNA project: the Mammalian Gene Collection (MGC).</title>
        <authorList>
            <consortium name="The MGC Project Team"/>
        </authorList>
    </citation>
    <scope>NUCLEOTIDE SEQUENCE [LARGE SCALE MRNA] (ISOFORM 1)</scope>
    <source>
        <strain>Brown Norway</strain>
        <tissue>Kidney</tissue>
    </source>
</reference>
<reference key="3">
    <citation type="journal article" date="1987" name="J. Biol. Chem.">
        <title>Isolation and structural characterization of the rat acyl-CoA oxidase gene.</title>
        <authorList>
            <person name="Osumi T."/>
            <person name="Ishii N."/>
            <person name="Miyazawa S."/>
            <person name="Hashimoto T."/>
        </authorList>
    </citation>
    <scope>NUCLEOTIDE SEQUENCE [GENOMIC DNA] OF 1-36</scope>
</reference>
<reference key="4">
    <citation type="journal article" date="1980" name="J. Biochem.">
        <title>Stereochemistry of dehydrogenation catalyzed by Acyl-CoA oxidase.</title>
        <authorList>
            <person name="Kawaguchi A."/>
            <person name="Tsubotani S."/>
            <person name="Seyama Y."/>
            <person name="Yamakawa T."/>
            <person name="Osumi T."/>
            <person name="Hashimoto T."/>
            <person name="Kikuchi T."/>
            <person name="Ando M."/>
            <person name="Okuda S."/>
        </authorList>
    </citation>
    <scope>FUNCTION</scope>
    <scope>CATALYTIC ACTIVITY</scope>
</reference>
<reference key="5">
    <citation type="journal article" date="1992" name="J. Biol. Chem.">
        <title>Substrate specificities of rat liver peroxisomal acyl-CoA oxidases: palmitoyl-CoA oxidase (inducible acyl-CoA oxidase), pristanoyl-CoA oxidase (non-inducible acyl-CoA oxidase), and trihydroxycoprostanoyl-CoA oxidase.</title>
        <authorList>
            <person name="Van Veldhoven P.P."/>
            <person name="Vanhove G."/>
            <person name="Assselberghs S."/>
            <person name="Eyssen H.J."/>
            <person name="Mannaerts G.P."/>
        </authorList>
    </citation>
    <scope>FUNCTION</scope>
    <scope>CATALYTIC ACTIVITY</scope>
    <scope>TISSUE SPECIFICITY</scope>
</reference>
<reference key="6">
    <citation type="journal article" date="1995" name="Biochem. Biophys. Res. Commun.">
        <title>Functional expression of two forms of rat acyl-CoA oxidase and their substrate specificities.</title>
        <authorList>
            <person name="Setoyama C."/>
            <person name="Tamaoki H."/>
            <person name="Nishina Y."/>
            <person name="Shiga K."/>
            <person name="Miura R."/>
        </authorList>
    </citation>
    <scope>CATALYTIC ACTIVITY (ISOFORMS 1 AND 2)</scope>
    <scope>FUNCTION (ISOFORMS 1 AND 2)</scope>
</reference>
<reference key="7">
    <citation type="journal article" date="2020" name="Neuron">
        <title>Loss- or Gain-of-Function Mutations in ACOX1 Cause Axonal Loss via Different Mechanisms.</title>
        <authorList>
            <consortium name="Members of Undiagnosed Diseases Network"/>
            <person name="Chung H.L."/>
            <person name="Wangler M.F."/>
            <person name="Marcogliese P.C."/>
            <person name="Jo J."/>
            <person name="Ravenscroft T.A."/>
            <person name="Zuo Z."/>
            <person name="Duraine L."/>
            <person name="Sadeghzadeh S."/>
            <person name="Li-Kroeger D."/>
            <person name="Schmidt R.E."/>
            <person name="Pestronk A."/>
            <person name="Rosenfeld J.A."/>
            <person name="Burrage L."/>
            <person name="Herndon M.J."/>
            <person name="Chen S."/>
            <person name="Shillington A."/>
            <person name="Vawter-Lee M."/>
            <person name="Hopkin R."/>
            <person name="Rodriguez-Smith J."/>
            <person name="Henrickson M."/>
            <person name="Lee B."/>
            <person name="Moser A.B."/>
            <person name="Jones R.O."/>
            <person name="Watkins P."/>
            <person name="Yoo T."/>
            <person name="Mar S."/>
            <person name="Choi M."/>
            <person name="Bucelli R.C."/>
            <person name="Yamamoto S."/>
            <person name="Lee H.K."/>
            <person name="Prada C.E."/>
            <person name="Chae J.H."/>
            <person name="Vogel T.P."/>
            <person name="Bellen H.J."/>
        </authorList>
    </citation>
    <scope>TISSUE SPECIFICITY</scope>
</reference>
<reference key="8">
    <citation type="journal article" date="2002" name="J. Biochem.">
        <title>Three-dimensional structure of the flavoenzyme acyl-CoA oxidase-II from rat liver, the peroxisomal counterpart of mitochondrial acyl-CoA dehydrogenase.</title>
        <authorList>
            <person name="Nakajima Y."/>
            <person name="Miyahara I."/>
            <person name="Hirotsu K."/>
            <person name="Nishina Y."/>
            <person name="Shiga K."/>
            <person name="Setoyama C."/>
            <person name="Tamaoki H."/>
            <person name="Miura R."/>
        </authorList>
    </citation>
    <scope>X-RAY CRYSTALLOGRAPHY (2.2 ANGSTROMS) IN COMPLEX WITH A C12-FATTY ACID (ISOFORM 2)</scope>
    <scope>SUBUNIT</scope>
    <scope>ACTIVE SITE</scope>
    <scope>COFACTOR</scope>
    <scope>SUBCELLULAR LOCATION</scope>
</reference>
<reference key="9">
    <citation type="journal article" date="2006" name="J. Biochem.">
        <title>Three-dimensional structure of rat-liver acyl-CoA oxidase in complex with a fatty acid: insights into substrate-recognition and reactivity toward molecular oxygen.</title>
        <authorList>
            <person name="Tokuoka K."/>
            <person name="Nakajima Y."/>
            <person name="Hirotsu K."/>
            <person name="Miyahara I."/>
            <person name="Nishina Y."/>
            <person name="Shiga K."/>
            <person name="Tamaoki H."/>
            <person name="Setoyama C."/>
            <person name="Tojo H."/>
            <person name="Miura R."/>
        </authorList>
    </citation>
    <scope>X-RAY CRYSTALLOGRAPHY (2.07 ANGSTROMS)(ISOFORM 2)</scope>
    <scope>FUNCTION</scope>
    <scope>SUBUNIT</scope>
    <scope>CATALYTIC ACTIVITY (ISOFORM 2)</scope>
    <scope>ACTIVE SITE</scope>
    <scope>COFACTOR</scope>
</reference>
<organism>
    <name type="scientific">Rattus norvegicus</name>
    <name type="common">Rat</name>
    <dbReference type="NCBI Taxonomy" id="10116"/>
    <lineage>
        <taxon>Eukaryota</taxon>
        <taxon>Metazoa</taxon>
        <taxon>Chordata</taxon>
        <taxon>Craniata</taxon>
        <taxon>Vertebrata</taxon>
        <taxon>Euteleostomi</taxon>
        <taxon>Mammalia</taxon>
        <taxon>Eutheria</taxon>
        <taxon>Euarchontoglires</taxon>
        <taxon>Glires</taxon>
        <taxon>Rodentia</taxon>
        <taxon>Myomorpha</taxon>
        <taxon>Muroidea</taxon>
        <taxon>Muridae</taxon>
        <taxon>Murinae</taxon>
        <taxon>Rattus</taxon>
    </lineage>
</organism>
<protein>
    <recommendedName>
        <fullName evidence="11 14 16">Peroxisomal acyl-coenzyme A oxidase 1</fullName>
        <shortName evidence="11 14 16">ACO</shortName>
        <shortName evidence="1">AOX</shortName>
        <ecNumber evidence="6 10 19 22">1.3.3.6</ecNumber>
    </recommendedName>
    <alternativeName>
        <fullName evidence="12">Palmitoyl-CoA oxidase</fullName>
    </alternativeName>
    <alternativeName>
        <fullName>Peroxisomal fatty acyl-CoA oxidase</fullName>
    </alternativeName>
    <alternativeName>
        <fullName>Straight-chain acyl-CoA oxidase</fullName>
    </alternativeName>
    <component>
        <recommendedName>
            <fullName evidence="15">Peroxisomal acyl-CoA oxidase 1, A chain</fullName>
        </recommendedName>
    </component>
    <component>
        <recommendedName>
            <fullName evidence="15">Peroxisomal acyl-CoA oxidase 1, B chain</fullName>
        </recommendedName>
    </component>
    <component>
        <recommendedName>
            <fullName evidence="15">Peroxisomal acyl-CoA oxidase 1, C chain</fullName>
        </recommendedName>
    </component>
</protein>
<accession>P07872</accession>
<accession>P11354</accession>
<proteinExistence type="evidence at protein level"/>
<feature type="chain" id="PRO_0000000552" description="Peroxisomal acyl-CoA oxidase 1, A chain">
    <location>
        <begin position="1"/>
        <end position="661"/>
    </location>
</feature>
<feature type="chain" id="PRO_0000000553" description="Peroxisomal acyl-CoA oxidase 1, B chain" evidence="21">
    <location>
        <begin position="1"/>
        <end position="468"/>
    </location>
</feature>
<feature type="chain" id="PRO_0000000554" description="Peroxisomal acyl-CoA oxidase 1, C chain" evidence="21">
    <location>
        <begin position="469"/>
        <end position="661"/>
    </location>
</feature>
<feature type="short sequence motif" description="Microbody targeting signal" evidence="3">
    <location>
        <begin position="659"/>
        <end position="661"/>
    </location>
</feature>
<feature type="active site" description="Proton acceptor" evidence="4 6">
    <location>
        <position position="421"/>
    </location>
</feature>
<feature type="binding site" evidence="4 6">
    <location>
        <position position="139"/>
    </location>
    <ligand>
        <name>FAD</name>
        <dbReference type="ChEBI" id="CHEBI:57692"/>
    </ligand>
</feature>
<feature type="binding site" evidence="4 6">
    <location>
        <position position="178"/>
    </location>
    <ligand>
        <name>FAD</name>
        <dbReference type="ChEBI" id="CHEBI:57692"/>
    </ligand>
</feature>
<feature type="site" description="Cleavage" evidence="7">
    <location>
        <begin position="468"/>
        <end position="469"/>
    </location>
</feature>
<feature type="modified residue" description="Phosphoserine" evidence="1">
    <location>
        <position position="26"/>
    </location>
</feature>
<feature type="modified residue" description="N6-acetyllysine" evidence="2">
    <location>
        <position position="65"/>
    </location>
</feature>
<feature type="modified residue" description="N6-succinyllysine" evidence="2">
    <location>
        <position position="89"/>
    </location>
</feature>
<feature type="modified residue" description="N6-succinyllysine" evidence="2">
    <location>
        <position position="90"/>
    </location>
</feature>
<feature type="modified residue" description="N6-succinyllysine" evidence="2">
    <location>
        <position position="159"/>
    </location>
</feature>
<feature type="modified residue" description="N6-acetyllysine" evidence="2">
    <location>
        <position position="216"/>
    </location>
</feature>
<feature type="modified residue" description="N6-succinyllysine" evidence="2">
    <location>
        <position position="241"/>
    </location>
</feature>
<feature type="modified residue" description="N6-acetyllysine" evidence="1">
    <location>
        <position position="255"/>
    </location>
</feature>
<feature type="modified residue" description="N6-acetyllysine" evidence="1">
    <location>
        <position position="267"/>
    </location>
</feature>
<feature type="modified residue" description="N6-acetyllysine" evidence="2">
    <location>
        <position position="272"/>
    </location>
</feature>
<feature type="modified residue" description="N6-succinyllysine" evidence="2">
    <location>
        <position position="349"/>
    </location>
</feature>
<feature type="modified residue" description="N6-acetyllysine; alternate" evidence="1">
    <location>
        <position position="437"/>
    </location>
</feature>
<feature type="modified residue" description="N6-succinyllysine; alternate" evidence="2">
    <location>
        <position position="437"/>
    </location>
</feature>
<feature type="modified residue" description="N6-acetyllysine; alternate" evidence="2">
    <location>
        <position position="446"/>
    </location>
</feature>
<feature type="modified residue" description="N6-succinyllysine; alternate" evidence="2">
    <location>
        <position position="446"/>
    </location>
</feature>
<feature type="modified residue" description="N6-acetyllysine" evidence="1">
    <location>
        <position position="500"/>
    </location>
</feature>
<feature type="modified residue" description="N6-acetyllysine; alternate" evidence="2">
    <location>
        <position position="512"/>
    </location>
</feature>
<feature type="modified residue" description="N6-succinyllysine; alternate" evidence="2">
    <location>
        <position position="512"/>
    </location>
</feature>
<feature type="modified residue" description="N6-succinyllysine" evidence="2">
    <location>
        <position position="542"/>
    </location>
</feature>
<feature type="modified residue" description="N6-acetyllysine; alternate" evidence="2">
    <location>
        <position position="637"/>
    </location>
</feature>
<feature type="modified residue" description="N6-succinyllysine; alternate" evidence="2">
    <location>
        <position position="637"/>
    </location>
</feature>
<feature type="modified residue" description="N6-succinyllysine" evidence="2">
    <location>
        <position position="643"/>
    </location>
</feature>
<feature type="modified residue" description="Phosphoserine" evidence="2">
    <location>
        <position position="649"/>
    </location>
</feature>
<feature type="modified residue" description="N6-acetyllysine" evidence="2">
    <location>
        <position position="652"/>
    </location>
</feature>
<feature type="modified residue" description="N6-succinyllysine" evidence="2">
    <location>
        <position position="655"/>
    </location>
</feature>
<feature type="splice variant" id="VSP_000147" description="In isoform 2." evidence="15">
    <original>KLYLANFVEPVGLNYSMFIPTLLNQGTTAQQEKWMRPSQELQII</original>
    <variation>NSVHRGHPEPLDLHLGMFLPTLLHQATAEQQERFFMPAWNLEIT</variation>
    <location>
        <begin position="90"/>
        <end position="133"/>
    </location>
</feature>
<feature type="helix" evidence="26">
    <location>
        <begin position="3"/>
        <end position="11"/>
    </location>
</feature>
<feature type="helix" evidence="26">
    <location>
        <begin position="16"/>
        <end position="24"/>
    </location>
</feature>
<feature type="helix" evidence="26">
    <location>
        <begin position="27"/>
        <end position="41"/>
    </location>
</feature>
<feature type="helix" evidence="26">
    <location>
        <begin position="44"/>
        <end position="46"/>
    </location>
</feature>
<feature type="helix" evidence="26">
    <location>
        <begin position="51"/>
        <end position="53"/>
    </location>
</feature>
<feature type="helix" evidence="26">
    <location>
        <begin position="56"/>
        <end position="76"/>
    </location>
</feature>
<feature type="helix" evidence="26">
    <location>
        <begin position="82"/>
        <end position="93"/>
    </location>
</feature>
<feature type="helix" evidence="26">
    <location>
        <begin position="101"/>
        <end position="105"/>
    </location>
</feature>
<feature type="helix" evidence="26">
    <location>
        <begin position="107"/>
        <end position="111"/>
    </location>
</feature>
<feature type="helix" evidence="26">
    <location>
        <begin position="117"/>
        <end position="128"/>
    </location>
</feature>
<feature type="strand" evidence="26">
    <location>
        <begin position="134"/>
        <end position="137"/>
    </location>
</feature>
<feature type="strand" evidence="26">
    <location>
        <begin position="143"/>
        <end position="145"/>
    </location>
</feature>
<feature type="helix" evidence="26">
    <location>
        <begin position="147"/>
        <end position="149"/>
    </location>
</feature>
<feature type="strand" evidence="26">
    <location>
        <begin position="153"/>
        <end position="157"/>
    </location>
</feature>
<feature type="turn" evidence="26">
    <location>
        <begin position="158"/>
        <end position="161"/>
    </location>
</feature>
<feature type="strand" evidence="26">
    <location>
        <begin position="162"/>
        <end position="166"/>
    </location>
</feature>
<feature type="turn" evidence="25">
    <location>
        <begin position="170"/>
        <end position="172"/>
    </location>
</feature>
<feature type="strand" evidence="26">
    <location>
        <begin position="173"/>
        <end position="175"/>
    </location>
</feature>
<feature type="turn" evidence="26">
    <location>
        <begin position="178"/>
        <end position="183"/>
    </location>
</feature>
<feature type="strand" evidence="26">
    <location>
        <begin position="185"/>
        <end position="195"/>
    </location>
</feature>
<feature type="strand" evidence="26">
    <location>
        <begin position="198"/>
        <end position="208"/>
    </location>
</feature>
<feature type="turn" evidence="26">
    <location>
        <begin position="212"/>
        <end position="214"/>
    </location>
</feature>
<feature type="strand" evidence="26">
    <location>
        <begin position="221"/>
        <end position="225"/>
    </location>
</feature>
<feature type="strand" evidence="25">
    <location>
        <begin position="229"/>
        <end position="231"/>
    </location>
</feature>
<feature type="strand" evidence="26">
    <location>
        <begin position="238"/>
        <end position="248"/>
    </location>
</feature>
<feature type="helix" evidence="26">
    <location>
        <begin position="249"/>
        <end position="251"/>
    </location>
</feature>
<feature type="helix" evidence="26">
    <location>
        <begin position="279"/>
        <end position="306"/>
    </location>
</feature>
<feature type="helix" evidence="26">
    <location>
        <begin position="321"/>
        <end position="323"/>
    </location>
</feature>
<feature type="helix" evidence="26">
    <location>
        <begin position="325"/>
        <end position="353"/>
    </location>
</feature>
<feature type="turn" evidence="25">
    <location>
        <begin position="360"/>
        <end position="362"/>
    </location>
</feature>
<feature type="helix" evidence="26">
    <location>
        <begin position="367"/>
        <end position="395"/>
    </location>
</feature>
<feature type="helix" evidence="26">
    <location>
        <begin position="398"/>
        <end position="401"/>
    </location>
</feature>
<feature type="helix" evidence="26">
    <location>
        <begin position="403"/>
        <end position="405"/>
    </location>
</feature>
<feature type="helix" evidence="26">
    <location>
        <begin position="407"/>
        <end position="414"/>
    </location>
</feature>
<feature type="helix" evidence="26">
    <location>
        <begin position="415"/>
        <end position="418"/>
    </location>
</feature>
<feature type="strand" evidence="26">
    <location>
        <begin position="420"/>
        <end position="422"/>
    </location>
</feature>
<feature type="helix" evidence="26">
    <location>
        <begin position="424"/>
        <end position="444"/>
    </location>
</feature>
<feature type="helix" evidence="26">
    <location>
        <begin position="450"/>
        <end position="457"/>
    </location>
</feature>
<feature type="helix" evidence="26">
    <location>
        <begin position="480"/>
        <end position="509"/>
    </location>
</feature>
<feature type="helix" evidence="26">
    <location>
        <begin position="512"/>
        <end position="518"/>
    </location>
</feature>
<feature type="helix" evidence="26">
    <location>
        <begin position="520"/>
        <end position="542"/>
    </location>
</feature>
<feature type="helix" evidence="26">
    <location>
        <begin position="543"/>
        <end position="545"/>
    </location>
</feature>
<feature type="helix" evidence="26">
    <location>
        <begin position="549"/>
        <end position="569"/>
    </location>
</feature>
<feature type="helix" evidence="26">
    <location>
        <begin position="571"/>
        <end position="576"/>
    </location>
</feature>
<feature type="helix" evidence="26">
    <location>
        <begin position="582"/>
        <end position="599"/>
    </location>
</feature>
<feature type="helix" evidence="26">
    <location>
        <begin position="600"/>
        <end position="602"/>
    </location>
</feature>
<feature type="helix" evidence="26">
    <location>
        <begin position="603"/>
        <end position="608"/>
    </location>
</feature>
<feature type="helix" evidence="26">
    <location>
        <begin position="614"/>
        <end position="617"/>
    </location>
</feature>
<feature type="helix" evidence="26">
    <location>
        <begin position="628"/>
        <end position="638"/>
    </location>
</feature>
<feature type="helix" evidence="26">
    <location>
        <begin position="640"/>
        <end position="642"/>
    </location>
</feature>
<feature type="strand" evidence="26">
    <location>
        <begin position="643"/>
        <end position="646"/>
    </location>
</feature>
<feature type="helix" evidence="26">
    <location>
        <begin position="648"/>
        <end position="653"/>
    </location>
</feature>
<name>ACOX1_RAT</name>
<dbReference type="EC" id="1.3.3.6" evidence="6 10 19 22"/>
<dbReference type="EMBL" id="J02752">
    <property type="protein sequence ID" value="AAA40666.1"/>
    <property type="molecule type" value="mRNA"/>
</dbReference>
<dbReference type="EMBL" id="BC085743">
    <property type="protein sequence ID" value="AAH85743.1"/>
    <property type="molecule type" value="mRNA"/>
</dbReference>
<dbReference type="EMBL" id="J02753">
    <property type="protein sequence ID" value="AAA40667.1"/>
    <property type="molecule type" value="Genomic_DNA"/>
</dbReference>
<dbReference type="PIR" id="A29328">
    <property type="entry name" value="OXRTA1"/>
</dbReference>
<dbReference type="PIR" id="B29328">
    <property type="entry name" value="OXRTA2"/>
</dbReference>
<dbReference type="RefSeq" id="NP_001400944.1">
    <molecule id="P07872-2"/>
    <property type="nucleotide sequence ID" value="NM_001414015.1"/>
</dbReference>
<dbReference type="RefSeq" id="NP_059036.1">
    <molecule id="P07872-1"/>
    <property type="nucleotide sequence ID" value="NM_017340.3"/>
</dbReference>
<dbReference type="PDB" id="1IS2">
    <property type="method" value="X-ray"/>
    <property type="resolution" value="2.20 A"/>
    <property type="chains" value="A/B=1-661"/>
</dbReference>
<dbReference type="PDB" id="2DDH">
    <property type="method" value="X-ray"/>
    <property type="resolution" value="2.07 A"/>
    <property type="chains" value="A=1-661"/>
</dbReference>
<dbReference type="PDBsum" id="1IS2"/>
<dbReference type="PDBsum" id="2DDH"/>
<dbReference type="SMR" id="P07872"/>
<dbReference type="FunCoup" id="P07872">
    <property type="interactions" value="1823"/>
</dbReference>
<dbReference type="IntAct" id="P07872">
    <property type="interactions" value="7"/>
</dbReference>
<dbReference type="STRING" id="10116.ENSRNOP00000051538"/>
<dbReference type="BindingDB" id="P07872"/>
<dbReference type="ChEMBL" id="CHEMBL4632"/>
<dbReference type="SwissLipids" id="SLP:000000408"/>
<dbReference type="CarbonylDB" id="P07872"/>
<dbReference type="iPTMnet" id="P07872"/>
<dbReference type="PhosphoSitePlus" id="P07872"/>
<dbReference type="jPOST" id="P07872"/>
<dbReference type="PaxDb" id="10116-ENSRNOP00000051538"/>
<dbReference type="Ensembl" id="ENSRNOT00000042372.7">
    <molecule id="P07872-1"/>
    <property type="protein sequence ID" value="ENSRNOP00000051538.6"/>
    <property type="gene ID" value="ENSRNOG00000008755.9"/>
</dbReference>
<dbReference type="Ensembl" id="ENSRNOT00000046754.6">
    <molecule id="P07872-2"/>
    <property type="protein sequence ID" value="ENSRNOP00000042132.6"/>
    <property type="gene ID" value="ENSRNOG00000008755.9"/>
</dbReference>
<dbReference type="GeneID" id="50681"/>
<dbReference type="KEGG" id="rno:50681"/>
<dbReference type="AGR" id="RGD:619757"/>
<dbReference type="CTD" id="51"/>
<dbReference type="RGD" id="619757">
    <property type="gene designation" value="Acox1"/>
</dbReference>
<dbReference type="eggNOG" id="KOG0136">
    <property type="taxonomic scope" value="Eukaryota"/>
</dbReference>
<dbReference type="GeneTree" id="ENSGT00940000157287"/>
<dbReference type="InParanoid" id="P07872"/>
<dbReference type="OMA" id="ICTRFSA"/>
<dbReference type="OrthoDB" id="538336at2759"/>
<dbReference type="PhylomeDB" id="P07872"/>
<dbReference type="BRENDA" id="1.3.3.6">
    <property type="organism ID" value="5301"/>
</dbReference>
<dbReference type="Reactome" id="R-RNO-2046106">
    <property type="pathway name" value="alpha-linolenic acid (ALA) metabolism"/>
</dbReference>
<dbReference type="Reactome" id="R-RNO-390247">
    <property type="pathway name" value="Beta-oxidation of very long chain fatty acids"/>
</dbReference>
<dbReference type="Reactome" id="R-RNO-9033241">
    <property type="pathway name" value="Peroxisomal protein import"/>
</dbReference>
<dbReference type="SABIO-RK" id="P07872"/>
<dbReference type="UniPathway" id="UPA00661"/>
<dbReference type="EvolutionaryTrace" id="P07872"/>
<dbReference type="PRO" id="PR:P07872"/>
<dbReference type="Proteomes" id="UP000002494">
    <property type="component" value="Chromosome 10"/>
</dbReference>
<dbReference type="GO" id="GO:0005737">
    <property type="term" value="C:cytoplasm"/>
    <property type="evidence" value="ECO:0000266"/>
    <property type="project" value="RGD"/>
</dbReference>
<dbReference type="GO" id="GO:0005782">
    <property type="term" value="C:peroxisomal matrix"/>
    <property type="evidence" value="ECO:0000304"/>
    <property type="project" value="Reactome"/>
</dbReference>
<dbReference type="GO" id="GO:0005778">
    <property type="term" value="C:peroxisomal membrane"/>
    <property type="evidence" value="ECO:0000266"/>
    <property type="project" value="RGD"/>
</dbReference>
<dbReference type="GO" id="GO:0005777">
    <property type="term" value="C:peroxisome"/>
    <property type="evidence" value="ECO:0000314"/>
    <property type="project" value="UniProtKB"/>
</dbReference>
<dbReference type="GO" id="GO:0003997">
    <property type="term" value="F:acyl-CoA oxidase activity"/>
    <property type="evidence" value="ECO:0000314"/>
    <property type="project" value="UniProtKB"/>
</dbReference>
<dbReference type="GO" id="GO:0071949">
    <property type="term" value="F:FAD binding"/>
    <property type="evidence" value="ECO:0000266"/>
    <property type="project" value="RGD"/>
</dbReference>
<dbReference type="GO" id="GO:0005504">
    <property type="term" value="F:fatty acid binding"/>
    <property type="evidence" value="ECO:0000314"/>
    <property type="project" value="RGD"/>
</dbReference>
<dbReference type="GO" id="GO:0050660">
    <property type="term" value="F:flavin adenine dinucleotide binding"/>
    <property type="evidence" value="ECO:0000314"/>
    <property type="project" value="UniProtKB"/>
</dbReference>
<dbReference type="GO" id="GO:0016401">
    <property type="term" value="F:palmitoyl-CoA oxidase activity"/>
    <property type="evidence" value="ECO:0000314"/>
    <property type="project" value="RGD"/>
</dbReference>
<dbReference type="GO" id="GO:0030165">
    <property type="term" value="F:PDZ domain binding"/>
    <property type="evidence" value="ECO:0000266"/>
    <property type="project" value="RGD"/>
</dbReference>
<dbReference type="GO" id="GO:0042803">
    <property type="term" value="F:protein homodimerization activity"/>
    <property type="evidence" value="ECO:0000314"/>
    <property type="project" value="UniProtKB"/>
</dbReference>
<dbReference type="GO" id="GO:0036109">
    <property type="term" value="P:alpha-linolenic acid metabolic process"/>
    <property type="evidence" value="ECO:0007669"/>
    <property type="project" value="Ensembl"/>
</dbReference>
<dbReference type="GO" id="GO:0033540">
    <property type="term" value="P:fatty acid beta-oxidation using acyl-CoA oxidase"/>
    <property type="evidence" value="ECO:0000314"/>
    <property type="project" value="RGD"/>
</dbReference>
<dbReference type="GO" id="GO:0009062">
    <property type="term" value="P:fatty acid catabolic process"/>
    <property type="evidence" value="ECO:0000266"/>
    <property type="project" value="RGD"/>
</dbReference>
<dbReference type="GO" id="GO:1901570">
    <property type="term" value="P:fatty acid derivative biosynthetic process"/>
    <property type="evidence" value="ECO:0007669"/>
    <property type="project" value="Ensembl"/>
</dbReference>
<dbReference type="GO" id="GO:0019395">
    <property type="term" value="P:fatty acid oxidation"/>
    <property type="evidence" value="ECO:0000250"/>
    <property type="project" value="UniProtKB"/>
</dbReference>
<dbReference type="GO" id="GO:0006091">
    <property type="term" value="P:generation of precursor metabolites and energy"/>
    <property type="evidence" value="ECO:0000250"/>
    <property type="project" value="UniProtKB"/>
</dbReference>
<dbReference type="GO" id="GO:0050665">
    <property type="term" value="P:hydrogen peroxide biosynthetic process"/>
    <property type="evidence" value="ECO:0000250"/>
    <property type="project" value="UniProtKB"/>
</dbReference>
<dbReference type="GO" id="GO:0006629">
    <property type="term" value="P:lipid metabolic process"/>
    <property type="evidence" value="ECO:0000250"/>
    <property type="project" value="UniProtKB"/>
</dbReference>
<dbReference type="GO" id="GO:0042759">
    <property type="term" value="P:long-chain fatty acid biosynthetic process"/>
    <property type="evidence" value="ECO:0007669"/>
    <property type="project" value="Ensembl"/>
</dbReference>
<dbReference type="GO" id="GO:0006693">
    <property type="term" value="P:prostaglandin metabolic process"/>
    <property type="evidence" value="ECO:0000250"/>
    <property type="project" value="UniProtKB"/>
</dbReference>
<dbReference type="GO" id="GO:0007283">
    <property type="term" value="P:spermatogenesis"/>
    <property type="evidence" value="ECO:0000266"/>
    <property type="project" value="RGD"/>
</dbReference>
<dbReference type="GO" id="GO:0006636">
    <property type="term" value="P:unsaturated fatty acid biosynthetic process"/>
    <property type="evidence" value="ECO:0007669"/>
    <property type="project" value="Ensembl"/>
</dbReference>
<dbReference type="GO" id="GO:0140493">
    <property type="term" value="P:very long-chain fatty acid beta-oxidation"/>
    <property type="evidence" value="ECO:0000266"/>
    <property type="project" value="RGD"/>
</dbReference>
<dbReference type="GO" id="GO:0000038">
    <property type="term" value="P:very long-chain fatty acid metabolic process"/>
    <property type="evidence" value="ECO:0000266"/>
    <property type="project" value="RGD"/>
</dbReference>
<dbReference type="CDD" id="cd01150">
    <property type="entry name" value="AXO"/>
    <property type="match status" value="1"/>
</dbReference>
<dbReference type="FunFam" id="1.10.540.10:FF:000006">
    <property type="entry name" value="Acyl-coenzyme A oxidase"/>
    <property type="match status" value="1"/>
</dbReference>
<dbReference type="FunFam" id="1.20.140.10:FF:000005">
    <property type="entry name" value="Acyl-coenzyme A oxidase"/>
    <property type="match status" value="1"/>
</dbReference>
<dbReference type="FunFam" id="1.20.140.10:FF:000007">
    <property type="entry name" value="Acyl-coenzyme A oxidase"/>
    <property type="match status" value="1"/>
</dbReference>
<dbReference type="FunFam" id="2.40.110.10:FF:000003">
    <property type="entry name" value="Acyl-coenzyme A oxidase"/>
    <property type="match status" value="1"/>
</dbReference>
<dbReference type="Gene3D" id="1.10.540.10">
    <property type="entry name" value="Acyl-CoA dehydrogenase/oxidase, N-terminal domain"/>
    <property type="match status" value="1"/>
</dbReference>
<dbReference type="Gene3D" id="2.40.110.10">
    <property type="entry name" value="Butyryl-CoA Dehydrogenase, subunit A, domain 2"/>
    <property type="match status" value="1"/>
</dbReference>
<dbReference type="Gene3D" id="1.20.140.10">
    <property type="entry name" value="Butyryl-CoA Dehydrogenase, subunit A, domain 3"/>
    <property type="match status" value="2"/>
</dbReference>
<dbReference type="InterPro" id="IPR034171">
    <property type="entry name" value="ACO"/>
</dbReference>
<dbReference type="InterPro" id="IPR055060">
    <property type="entry name" value="ACOX_C_alpha1"/>
</dbReference>
<dbReference type="InterPro" id="IPR029320">
    <property type="entry name" value="Acyl-CoA_ox_N"/>
</dbReference>
<dbReference type="InterPro" id="IPR006091">
    <property type="entry name" value="Acyl-CoA_Oxase/DH_mid-dom"/>
</dbReference>
<dbReference type="InterPro" id="IPR046373">
    <property type="entry name" value="Acyl-CoA_Oxase/DH_mid-dom_sf"/>
</dbReference>
<dbReference type="InterPro" id="IPR012258">
    <property type="entry name" value="Acyl-CoA_oxidase"/>
</dbReference>
<dbReference type="InterPro" id="IPR002655">
    <property type="entry name" value="Acyl-CoA_oxidase_C"/>
</dbReference>
<dbReference type="InterPro" id="IPR036250">
    <property type="entry name" value="AcylCo_DH-like_C"/>
</dbReference>
<dbReference type="InterPro" id="IPR037069">
    <property type="entry name" value="AcylCoA_DH/ox_N_sf"/>
</dbReference>
<dbReference type="InterPro" id="IPR009100">
    <property type="entry name" value="AcylCoA_DH/oxidase_NM_dom_sf"/>
</dbReference>
<dbReference type="PANTHER" id="PTHR10909">
    <property type="entry name" value="ELECTRON TRANSPORT OXIDOREDUCTASE"/>
    <property type="match status" value="1"/>
</dbReference>
<dbReference type="PANTHER" id="PTHR10909:SF250">
    <property type="entry name" value="PEROXISOMAL ACYL-COENZYME A OXIDASE 1"/>
    <property type="match status" value="1"/>
</dbReference>
<dbReference type="Pfam" id="PF01756">
    <property type="entry name" value="ACOX"/>
    <property type="match status" value="1"/>
</dbReference>
<dbReference type="Pfam" id="PF22924">
    <property type="entry name" value="ACOX_C_alpha1"/>
    <property type="match status" value="1"/>
</dbReference>
<dbReference type="Pfam" id="PF02770">
    <property type="entry name" value="Acyl-CoA_dh_M"/>
    <property type="match status" value="1"/>
</dbReference>
<dbReference type="Pfam" id="PF14749">
    <property type="entry name" value="Acyl-CoA_ox_N"/>
    <property type="match status" value="1"/>
</dbReference>
<dbReference type="PIRSF" id="PIRSF000168">
    <property type="entry name" value="Acyl-CoA_oxidase"/>
    <property type="match status" value="1"/>
</dbReference>
<dbReference type="SUPFAM" id="SSF47203">
    <property type="entry name" value="Acyl-CoA dehydrogenase C-terminal domain-like"/>
    <property type="match status" value="2"/>
</dbReference>
<dbReference type="SUPFAM" id="SSF56645">
    <property type="entry name" value="Acyl-CoA dehydrogenase NM domain-like"/>
    <property type="match status" value="1"/>
</dbReference>
<evidence type="ECO:0000250" key="1">
    <source>
        <dbReference type="UniProtKB" id="Q15067"/>
    </source>
</evidence>
<evidence type="ECO:0000250" key="2">
    <source>
        <dbReference type="UniProtKB" id="Q9R0H0"/>
    </source>
</evidence>
<evidence type="ECO:0000255" key="3"/>
<evidence type="ECO:0000269" key="4">
    <source>
    </source>
</evidence>
<evidence type="ECO:0000269" key="5">
    <source>
    </source>
</evidence>
<evidence type="ECO:0000269" key="6">
    <source>
    </source>
</evidence>
<evidence type="ECO:0000269" key="7">
    <source>
    </source>
</evidence>
<evidence type="ECO:0000269" key="8">
    <source>
    </source>
</evidence>
<evidence type="ECO:0000269" key="9">
    <source>
    </source>
</evidence>
<evidence type="ECO:0000269" key="10">
    <source>
    </source>
</evidence>
<evidence type="ECO:0000303" key="11">
    <source>
    </source>
</evidence>
<evidence type="ECO:0000303" key="12">
    <source>
    </source>
</evidence>
<evidence type="ECO:0000303" key="13">
    <source>
    </source>
</evidence>
<evidence type="ECO:0000303" key="14">
    <source>
    </source>
</evidence>
<evidence type="ECO:0000303" key="15">
    <source>
    </source>
</evidence>
<evidence type="ECO:0000303" key="16">
    <source>
    </source>
</evidence>
<evidence type="ECO:0000305" key="17"/>
<evidence type="ECO:0000305" key="18">
    <source>
    </source>
</evidence>
<evidence type="ECO:0000305" key="19">
    <source>
    </source>
</evidence>
<evidence type="ECO:0000305" key="20">
    <source>
    </source>
</evidence>
<evidence type="ECO:0000305" key="21">
    <source>
    </source>
</evidence>
<evidence type="ECO:0000305" key="22">
    <source>
    </source>
</evidence>
<evidence type="ECO:0000305" key="23">
    <source>
    </source>
</evidence>
<evidence type="ECO:0000312" key="24">
    <source>
        <dbReference type="RGD" id="619757"/>
    </source>
</evidence>
<evidence type="ECO:0007829" key="25">
    <source>
        <dbReference type="PDB" id="1IS2"/>
    </source>
</evidence>
<evidence type="ECO:0007829" key="26">
    <source>
        <dbReference type="PDB" id="2DDH"/>
    </source>
</evidence>
<gene>
    <name evidence="24" type="primary">Acox1</name>
    <name evidence="13" type="synonym">Acox</name>
</gene>
<keyword id="KW-0002">3D-structure</keyword>
<keyword id="KW-0007">Acetylation</keyword>
<keyword id="KW-0025">Alternative splicing</keyword>
<keyword id="KW-0903">Direct protein sequencing</keyword>
<keyword id="KW-0274">FAD</keyword>
<keyword id="KW-0276">Fatty acid metabolism</keyword>
<keyword id="KW-0285">Flavoprotein</keyword>
<keyword id="KW-0443">Lipid metabolism</keyword>
<keyword id="KW-0560">Oxidoreductase</keyword>
<keyword id="KW-0576">Peroxisome</keyword>
<keyword id="KW-0597">Phosphoprotein</keyword>
<keyword id="KW-1185">Reference proteome</keyword>
<sequence>MNPDLRKERASATFNPELITHILDGSPENTRRRREIENLILNDPDFQHEDYNFLTRSQRYEVAVKKSATMVKKMREYGISDPEEIMWFKKLYLANFVEPVGLNYSMFIPTLLNQGTTAQQEKWMRPSQELQIIGTYAQTEMGHGTHLRGLETTATYDPKTQEFILNSPTVTSIKWWPGGLGKTSNHAIVLAQLITQGECYGLHAFVVPIREIGTHKPLPGITVGDIGPKFGYEEMDNGYLKMDNYRIPRENMLMKYAQVKPDGTYVKPLSNKLTYGTMVFVRSFLVGNAAQSLSKACTIAIRYSAVRRQSEIKQSEPEPQILDFQTQQYKLFPLLATAYAFHFVGRYMKETYLRINESIGQGDLSELPELHALTAGLKAFTTWTANAGIEECRMACGGHGYSHSSGIPNIYVTFTPACTFEGENTVMMLQTARFLMKIYDQVRSGKLVGGMVSYLNDLPSQRIQPQQVAVWPTMVDINSLEGLTEAYKLRAARLVEIAAKNLQTHVSHRKSKEVAWNLTSVDLVRASEAHCHYVVVKVFSDKLPKIQDKAVQAVLRNLCLLYSLYGISQKGGDFLEGSIITGAQLSQVNARILELLTLIRPNAVALVDAFDFKDMTLGSVLGRYDGNVYENLFEWAKKSPLNKTEVHESYHKHLKPLQSKL</sequence>
<comment type="function">
    <text evidence="5 6 9 10">Involved in the initial and rate-limiting step of peroxisomal beta-oxidation of straight-chain saturated and unsaturated very-long-chain fatty acids. Catalyzes the desaturation of fatty acyl-CoAs such as palmitoyl-CoA (hexadecanoyl-CoA) to 2-trans-enoyl-CoAs ((2E)-enoyl-CoAs) such as (2E)-hexadecenoyl-CoA, and donates electrons directly to molecular oxygen (O(2)), thereby producing hydrogen peroxide (H(2)O(2)).</text>
</comment>
<comment type="function">
    <molecule>Isoform 1</molecule>
    <text evidence="10">Shows highest activity against medium-chain fatty acyl-CoAs. Shows optimum activity with a chain length of 10 carbons (decanoyl-CoA) in vitro.</text>
</comment>
<comment type="function">
    <molecule>Isoform 2</molecule>
    <text evidence="10">Is active against a much broader range of substrates and shows activity towards long-chain acyl-CoAs.</text>
</comment>
<comment type="catalytic activity">
    <reaction evidence="6 10 19 22">
        <text>a 2,3-saturated acyl-CoA + O2 = a (2E)-enoyl-CoA + H2O2</text>
        <dbReference type="Rhea" id="RHEA:38959"/>
        <dbReference type="ChEBI" id="CHEBI:15379"/>
        <dbReference type="ChEBI" id="CHEBI:16240"/>
        <dbReference type="ChEBI" id="CHEBI:58856"/>
        <dbReference type="ChEBI" id="CHEBI:65111"/>
        <dbReference type="EC" id="1.3.3.6"/>
    </reaction>
    <physiologicalReaction direction="left-to-right" evidence="18 19 20 22 23">
        <dbReference type="Rhea" id="RHEA:38960"/>
    </physiologicalReaction>
</comment>
<comment type="catalytic activity">
    <reaction evidence="19">
        <text>hexadecanoyl-CoA + O2 = (2E)-hexadecenoyl-CoA + H2O2</text>
        <dbReference type="Rhea" id="RHEA:40167"/>
        <dbReference type="ChEBI" id="CHEBI:15379"/>
        <dbReference type="ChEBI" id="CHEBI:16240"/>
        <dbReference type="ChEBI" id="CHEBI:57379"/>
        <dbReference type="ChEBI" id="CHEBI:61526"/>
    </reaction>
    <physiologicalReaction direction="left-to-right" evidence="19">
        <dbReference type="Rhea" id="RHEA:40168"/>
    </physiologicalReaction>
</comment>
<comment type="catalytic activity">
    <molecule>Isoform 1</molecule>
    <reaction evidence="10">
        <text>hexadecanoyl-CoA + O2 = (2E)-hexadecenoyl-CoA + H2O2</text>
        <dbReference type="Rhea" id="RHEA:40167"/>
        <dbReference type="ChEBI" id="CHEBI:15379"/>
        <dbReference type="ChEBI" id="CHEBI:16240"/>
        <dbReference type="ChEBI" id="CHEBI:57379"/>
        <dbReference type="ChEBI" id="CHEBI:61526"/>
    </reaction>
    <physiologicalReaction direction="left-to-right" evidence="23">
        <dbReference type="Rhea" id="RHEA:40168"/>
    </physiologicalReaction>
</comment>
<comment type="catalytic activity">
    <molecule>Isoform 2</molecule>
    <reaction evidence="10">
        <text>hexadecanoyl-CoA + O2 = (2E)-hexadecenoyl-CoA + H2O2</text>
        <dbReference type="Rhea" id="RHEA:40167"/>
        <dbReference type="ChEBI" id="CHEBI:15379"/>
        <dbReference type="ChEBI" id="CHEBI:16240"/>
        <dbReference type="ChEBI" id="CHEBI:57379"/>
        <dbReference type="ChEBI" id="CHEBI:61526"/>
    </reaction>
    <physiologicalReaction direction="left-to-right" evidence="23">
        <dbReference type="Rhea" id="RHEA:40168"/>
    </physiologicalReaction>
</comment>
<comment type="catalytic activity">
    <molecule>Isoform 1</molecule>
    <reaction evidence="10">
        <text>dodecanoyl-CoA + O2 = (2E)-dodecenoyl-CoA + H2O2</text>
        <dbReference type="Rhea" id="RHEA:40171"/>
        <dbReference type="ChEBI" id="CHEBI:15379"/>
        <dbReference type="ChEBI" id="CHEBI:16240"/>
        <dbReference type="ChEBI" id="CHEBI:57330"/>
        <dbReference type="ChEBI" id="CHEBI:57375"/>
    </reaction>
    <physiologicalReaction direction="left-to-right" evidence="23">
        <dbReference type="Rhea" id="RHEA:40172"/>
    </physiologicalReaction>
</comment>
<comment type="catalytic activity">
    <molecule>Isoform 2</molecule>
    <reaction evidence="6 10">
        <text>dodecanoyl-CoA + O2 = (2E)-dodecenoyl-CoA + H2O2</text>
        <dbReference type="Rhea" id="RHEA:40171"/>
        <dbReference type="ChEBI" id="CHEBI:15379"/>
        <dbReference type="ChEBI" id="CHEBI:16240"/>
        <dbReference type="ChEBI" id="CHEBI:57330"/>
        <dbReference type="ChEBI" id="CHEBI:57375"/>
    </reaction>
    <physiologicalReaction direction="left-to-right" evidence="20 23">
        <dbReference type="Rhea" id="RHEA:40172"/>
    </physiologicalReaction>
</comment>
<comment type="catalytic activity">
    <molecule>Isoform 1</molecule>
    <reaction evidence="10">
        <text>octanoyl-CoA + O2 = (2E)-octenoyl-CoA + H2O2</text>
        <dbReference type="Rhea" id="RHEA:40175"/>
        <dbReference type="ChEBI" id="CHEBI:15379"/>
        <dbReference type="ChEBI" id="CHEBI:16240"/>
        <dbReference type="ChEBI" id="CHEBI:57386"/>
        <dbReference type="ChEBI" id="CHEBI:62242"/>
    </reaction>
    <physiologicalReaction direction="left-to-right" evidence="23">
        <dbReference type="Rhea" id="RHEA:40176"/>
    </physiologicalReaction>
</comment>
<comment type="catalytic activity">
    <molecule>Isoform 1</molecule>
    <reaction evidence="10">
        <text>decanoyl-CoA + O2 = (2E)-decenoyl-CoA + H2O2</text>
        <dbReference type="Rhea" id="RHEA:40179"/>
        <dbReference type="ChEBI" id="CHEBI:15379"/>
        <dbReference type="ChEBI" id="CHEBI:16240"/>
        <dbReference type="ChEBI" id="CHEBI:61406"/>
        <dbReference type="ChEBI" id="CHEBI:61430"/>
    </reaction>
    <physiologicalReaction direction="left-to-right" evidence="23">
        <dbReference type="Rhea" id="RHEA:40180"/>
    </physiologicalReaction>
</comment>
<comment type="catalytic activity">
    <molecule>Isoform 1</molecule>
    <reaction evidence="10">
        <text>tetradecanoyl-CoA + O2 = (2E)-tetradecenoyl-CoA + H2O2</text>
        <dbReference type="Rhea" id="RHEA:40183"/>
        <dbReference type="ChEBI" id="CHEBI:15379"/>
        <dbReference type="ChEBI" id="CHEBI:16240"/>
        <dbReference type="ChEBI" id="CHEBI:57385"/>
        <dbReference type="ChEBI" id="CHEBI:61405"/>
    </reaction>
    <physiologicalReaction direction="left-to-right" evidence="23">
        <dbReference type="Rhea" id="RHEA:40184"/>
    </physiologicalReaction>
</comment>
<comment type="catalytic activity">
    <molecule>Isoform 2</molecule>
    <reaction evidence="10">
        <text>tetradecanoyl-CoA + O2 = (2E)-tetradecenoyl-CoA + H2O2</text>
        <dbReference type="Rhea" id="RHEA:40183"/>
        <dbReference type="ChEBI" id="CHEBI:15379"/>
        <dbReference type="ChEBI" id="CHEBI:16240"/>
        <dbReference type="ChEBI" id="CHEBI:57385"/>
        <dbReference type="ChEBI" id="CHEBI:61405"/>
    </reaction>
    <physiologicalReaction direction="left-to-right" evidence="23">
        <dbReference type="Rhea" id="RHEA:40184"/>
    </physiologicalReaction>
</comment>
<comment type="catalytic activity">
    <reaction evidence="19">
        <text>hexadecanedioyl-CoA + O2 = (2E)-hexadecenedioyl-CoA + H2O2</text>
        <dbReference type="Rhea" id="RHEA:40275"/>
        <dbReference type="ChEBI" id="CHEBI:15379"/>
        <dbReference type="ChEBI" id="CHEBI:16240"/>
        <dbReference type="ChEBI" id="CHEBI:77075"/>
        <dbReference type="ChEBI" id="CHEBI:77085"/>
    </reaction>
    <physiologicalReaction direction="left-to-right" evidence="19">
        <dbReference type="Rhea" id="RHEA:40276"/>
    </physiologicalReaction>
</comment>
<comment type="catalytic activity">
    <reaction evidence="19">
        <text>tetracosanoyl-CoA + O2 = (2E)-tetracosenoyl-CoA + H2O2</text>
        <dbReference type="Rhea" id="RHEA:40319"/>
        <dbReference type="ChEBI" id="CHEBI:15379"/>
        <dbReference type="ChEBI" id="CHEBI:16240"/>
        <dbReference type="ChEBI" id="CHEBI:65052"/>
        <dbReference type="ChEBI" id="CHEBI:74693"/>
    </reaction>
    <physiologicalReaction direction="left-to-right" evidence="19">
        <dbReference type="Rhea" id="RHEA:40320"/>
    </physiologicalReaction>
</comment>
<comment type="catalytic activity">
    <reaction evidence="19">
        <text>glutaryl-CoA + O2 = (2E)-glutaconyl-CoA + H2O2</text>
        <dbReference type="Rhea" id="RHEA:40315"/>
        <dbReference type="ChEBI" id="CHEBI:15379"/>
        <dbReference type="ChEBI" id="CHEBI:16240"/>
        <dbReference type="ChEBI" id="CHEBI:57353"/>
        <dbReference type="ChEBI" id="CHEBI:57378"/>
    </reaction>
    <physiologicalReaction direction="left-to-right" evidence="19">
        <dbReference type="Rhea" id="RHEA:40316"/>
    </physiologicalReaction>
</comment>
<comment type="catalytic activity">
    <reaction evidence="19">
        <text>hexanoyl-CoA + O2 = (2E)-hexenoyl-CoA + H2O2</text>
        <dbReference type="Rhea" id="RHEA:40311"/>
        <dbReference type="ChEBI" id="CHEBI:15379"/>
        <dbReference type="ChEBI" id="CHEBI:16240"/>
        <dbReference type="ChEBI" id="CHEBI:62077"/>
        <dbReference type="ChEBI" id="CHEBI:62620"/>
    </reaction>
    <physiologicalReaction direction="left-to-right" evidence="19">
        <dbReference type="Rhea" id="RHEA:40312"/>
    </physiologicalReaction>
</comment>
<comment type="catalytic activity">
    <reaction evidence="22">
        <text>octadecanoyl-CoA + O2 = (2E)-octadecenoyl-CoA + H2O2</text>
        <dbReference type="Rhea" id="RHEA:38971"/>
        <dbReference type="ChEBI" id="CHEBI:15379"/>
        <dbReference type="ChEBI" id="CHEBI:16240"/>
        <dbReference type="ChEBI" id="CHEBI:57394"/>
        <dbReference type="ChEBI" id="CHEBI:71412"/>
    </reaction>
    <physiologicalReaction direction="left-to-right" evidence="22">
        <dbReference type="Rhea" id="RHEA:38972"/>
    </physiologicalReaction>
</comment>
<comment type="catalytic activity">
    <molecule>Isoform 2</molecule>
    <reaction evidence="10">
        <text>octadecanoyl-CoA + O2 = (2E)-octadecenoyl-CoA + H2O2</text>
        <dbReference type="Rhea" id="RHEA:38971"/>
        <dbReference type="ChEBI" id="CHEBI:15379"/>
        <dbReference type="ChEBI" id="CHEBI:16240"/>
        <dbReference type="ChEBI" id="CHEBI:57394"/>
        <dbReference type="ChEBI" id="CHEBI:71412"/>
    </reaction>
    <physiologicalReaction direction="left-to-right" evidence="23">
        <dbReference type="Rhea" id="RHEA:38972"/>
    </physiologicalReaction>
</comment>
<comment type="catalytic activity">
    <reaction evidence="1">
        <text>(5Z,8Z,11Z,14Z,17Z)-eicosapentaenoyl-CoA + O2 = (2E,5Z,8Z,11Z,14Z,17Z)-icosahexaenoyl-CoA + H2O2</text>
        <dbReference type="Rhea" id="RHEA:69643"/>
        <dbReference type="ChEBI" id="CHEBI:15379"/>
        <dbReference type="ChEBI" id="CHEBI:16240"/>
        <dbReference type="ChEBI" id="CHEBI:73862"/>
        <dbReference type="ChEBI" id="CHEBI:187901"/>
    </reaction>
    <physiologicalReaction direction="left-to-right" evidence="1">
        <dbReference type="Rhea" id="RHEA:69644"/>
    </physiologicalReaction>
</comment>
<comment type="catalytic activity">
    <reaction evidence="2">
        <text>(6Z,9Z,12Z,15Z,18Z,21Z)-tetracosahexaenoyl-CoA + O2 = (2E,6Z,9Z,12Z,15Z,18Z,21Z)-tetracosaheptaenoyl-CoA + H2O2</text>
        <dbReference type="Rhea" id="RHEA:39119"/>
        <dbReference type="ChEBI" id="CHEBI:15379"/>
        <dbReference type="ChEBI" id="CHEBI:16240"/>
        <dbReference type="ChEBI" id="CHEBI:74086"/>
        <dbReference type="ChEBI" id="CHEBI:76360"/>
    </reaction>
    <physiologicalReaction direction="left-to-right" evidence="2">
        <dbReference type="Rhea" id="RHEA:39120"/>
    </physiologicalReaction>
</comment>
<comment type="cofactor">
    <cofactor evidence="4 6">
        <name>FAD</name>
        <dbReference type="ChEBI" id="CHEBI:57692"/>
    </cofactor>
</comment>
<comment type="pathway">
    <text>Lipid metabolism; peroxisomal fatty acid beta-oxidation.</text>
</comment>
<comment type="subunit">
    <text evidence="1 4 6">Homodimer. The enzyme contains three components A, B and C, the latter two being produced from the first by a proteolytic cleavage. Interacts with LONP2 (By similarity).</text>
</comment>
<comment type="subcellular location">
    <subcellularLocation>
        <location evidence="4">Peroxisome</location>
    </subcellularLocation>
</comment>
<comment type="alternative products">
    <event type="alternative splicing"/>
    <isoform>
        <id>P07872-1</id>
        <name>1</name>
        <name>ACO-I</name>
        <sequence type="displayed"/>
    </isoform>
    <isoform>
        <id>P07872-2</id>
        <name>2</name>
        <name>ACO-II</name>
        <sequence type="described" ref="VSP_000147"/>
    </isoform>
</comment>
<comment type="tissue specificity">
    <text evidence="5 8">Expressed in Schwann cells (PubMed:32169171). Expressed (at protein level) in liver (PubMed:1400324).</text>
</comment>
<comment type="similarity">
    <text evidence="17">Belongs to the acyl-CoA oxidase family.</text>
</comment>